<protein>
    <recommendedName>
        <fullName>ATP-dependent RNA helicase dbp9</fullName>
        <ecNumber>3.6.4.13</ecNumber>
    </recommendedName>
</protein>
<gene>
    <name type="primary">dbp9</name>
    <name type="ORF">NFIA_089170</name>
</gene>
<accession>A1DHV3</accession>
<proteinExistence type="inferred from homology"/>
<name>DBP9_NEOFI</name>
<keyword id="KW-0067">ATP-binding</keyword>
<keyword id="KW-0347">Helicase</keyword>
<keyword id="KW-0378">Hydrolase</keyword>
<keyword id="KW-0547">Nucleotide-binding</keyword>
<keyword id="KW-0539">Nucleus</keyword>
<keyword id="KW-1185">Reference proteome</keyword>
<keyword id="KW-0690">Ribosome biogenesis</keyword>
<keyword id="KW-0694">RNA-binding</keyword>
<keyword id="KW-0698">rRNA processing</keyword>
<organism>
    <name type="scientific">Neosartorya fischeri (strain ATCC 1020 / DSM 3700 / CBS 544.65 / FGSC A1164 / JCM 1740 / NRRL 181 / WB 181)</name>
    <name type="common">Aspergillus fischerianus</name>
    <dbReference type="NCBI Taxonomy" id="331117"/>
    <lineage>
        <taxon>Eukaryota</taxon>
        <taxon>Fungi</taxon>
        <taxon>Dikarya</taxon>
        <taxon>Ascomycota</taxon>
        <taxon>Pezizomycotina</taxon>
        <taxon>Eurotiomycetes</taxon>
        <taxon>Eurotiomycetidae</taxon>
        <taxon>Eurotiales</taxon>
        <taxon>Aspergillaceae</taxon>
        <taxon>Aspergillus</taxon>
        <taxon>Aspergillus subgen. Fumigati</taxon>
    </lineage>
</organism>
<feature type="chain" id="PRO_0000281720" description="ATP-dependent RNA helicase dbp9">
    <location>
        <begin position="1"/>
        <end position="619"/>
    </location>
</feature>
<feature type="domain" description="Helicase ATP-binding" evidence="2">
    <location>
        <begin position="58"/>
        <end position="236"/>
    </location>
</feature>
<feature type="domain" description="Helicase C-terminal" evidence="3">
    <location>
        <begin position="247"/>
        <end position="484"/>
    </location>
</feature>
<feature type="region of interest" description="Disordered" evidence="4">
    <location>
        <begin position="1"/>
        <end position="30"/>
    </location>
</feature>
<feature type="region of interest" description="Disordered" evidence="4">
    <location>
        <begin position="339"/>
        <end position="390"/>
    </location>
</feature>
<feature type="region of interest" description="Disordered" evidence="4">
    <location>
        <begin position="582"/>
        <end position="619"/>
    </location>
</feature>
<feature type="short sequence motif" description="Q motif">
    <location>
        <begin position="27"/>
        <end position="55"/>
    </location>
</feature>
<feature type="short sequence motif" description="DEAD box">
    <location>
        <begin position="184"/>
        <end position="187"/>
    </location>
</feature>
<feature type="compositionally biased region" description="Basic and acidic residues" evidence="4">
    <location>
        <begin position="16"/>
        <end position="25"/>
    </location>
</feature>
<feature type="compositionally biased region" description="Basic and acidic residues" evidence="4">
    <location>
        <begin position="345"/>
        <end position="362"/>
    </location>
</feature>
<feature type="compositionally biased region" description="Basic residues" evidence="4">
    <location>
        <begin position="587"/>
        <end position="604"/>
    </location>
</feature>
<feature type="binding site" evidence="2">
    <location>
        <begin position="71"/>
        <end position="78"/>
    </location>
    <ligand>
        <name>ATP</name>
        <dbReference type="ChEBI" id="CHEBI:30616"/>
    </ligand>
</feature>
<comment type="function">
    <text evidence="1">ATP-binding RNA helicase involved in the biogenesis of 60S ribosomal subunits and is required for the normal formation of 25S and 5.8S rRNAs.</text>
</comment>
<comment type="catalytic activity">
    <reaction>
        <text>ATP + H2O = ADP + phosphate + H(+)</text>
        <dbReference type="Rhea" id="RHEA:13065"/>
        <dbReference type="ChEBI" id="CHEBI:15377"/>
        <dbReference type="ChEBI" id="CHEBI:15378"/>
        <dbReference type="ChEBI" id="CHEBI:30616"/>
        <dbReference type="ChEBI" id="CHEBI:43474"/>
        <dbReference type="ChEBI" id="CHEBI:456216"/>
        <dbReference type="EC" id="3.6.4.13"/>
    </reaction>
</comment>
<comment type="subcellular location">
    <subcellularLocation>
        <location evidence="1">Nucleus</location>
        <location evidence="1">Nucleolus</location>
    </subcellularLocation>
</comment>
<comment type="domain">
    <text>The Q motif is unique to and characteristic of the DEAD box family of RNA helicases and controls ATP binding and hydrolysis.</text>
</comment>
<comment type="similarity">
    <text evidence="5">Belongs to the DEAD box helicase family. DDX56/DBP9 subfamily.</text>
</comment>
<evidence type="ECO:0000250" key="1"/>
<evidence type="ECO:0000255" key="2">
    <source>
        <dbReference type="PROSITE-ProRule" id="PRU00541"/>
    </source>
</evidence>
<evidence type="ECO:0000255" key="3">
    <source>
        <dbReference type="PROSITE-ProRule" id="PRU00542"/>
    </source>
</evidence>
<evidence type="ECO:0000256" key="4">
    <source>
        <dbReference type="SAM" id="MobiDB-lite"/>
    </source>
</evidence>
<evidence type="ECO:0000305" key="5"/>
<reference key="1">
    <citation type="journal article" date="2008" name="PLoS Genet.">
        <title>Genomic islands in the pathogenic filamentous fungus Aspergillus fumigatus.</title>
        <authorList>
            <person name="Fedorova N.D."/>
            <person name="Khaldi N."/>
            <person name="Joardar V.S."/>
            <person name="Maiti R."/>
            <person name="Amedeo P."/>
            <person name="Anderson M.J."/>
            <person name="Crabtree J."/>
            <person name="Silva J.C."/>
            <person name="Badger J.H."/>
            <person name="Albarraq A."/>
            <person name="Angiuoli S."/>
            <person name="Bussey H."/>
            <person name="Bowyer P."/>
            <person name="Cotty P.J."/>
            <person name="Dyer P.S."/>
            <person name="Egan A."/>
            <person name="Galens K."/>
            <person name="Fraser-Liggett C.M."/>
            <person name="Haas B.J."/>
            <person name="Inman J.M."/>
            <person name="Kent R."/>
            <person name="Lemieux S."/>
            <person name="Malavazi I."/>
            <person name="Orvis J."/>
            <person name="Roemer T."/>
            <person name="Ronning C.M."/>
            <person name="Sundaram J.P."/>
            <person name="Sutton G."/>
            <person name="Turner G."/>
            <person name="Venter J.C."/>
            <person name="White O.R."/>
            <person name="Whitty B.R."/>
            <person name="Youngman P."/>
            <person name="Wolfe K.H."/>
            <person name="Goldman G.H."/>
            <person name="Wortman J.R."/>
            <person name="Jiang B."/>
            <person name="Denning D.W."/>
            <person name="Nierman W.C."/>
        </authorList>
    </citation>
    <scope>NUCLEOTIDE SEQUENCE [LARGE SCALE GENOMIC DNA]</scope>
    <source>
        <strain>ATCC 1020 / DSM 3700 / CBS 544.65 / FGSC A1164 / JCM 1740 / NRRL 181 / WB 181</strain>
    </source>
</reference>
<sequence length="619" mass="69088">MKRKLDANDVPSTEVAEEKETKDADNTDFESLNLDPRLRQALIREQFTKPTPVQSKAIPLALEGKDILARAKTGSGKTAAYVLPILQTILQKKAADPSLKATTGLVLVPTRELAEQVQSVIIKFSAFCGKDVRSVNLTQKVSDAVQRTMLADYPDLIVSTPARVIANLGTSALSLEHLTHLVIDEADLVLSYGYDEDINALAKAIPRGVQTFLMSATLTSEVDTLKGLFCRSPVILKLEDKEDEGAGISQFVVRCAEDEKFLLTYVIFKLQLIKGKVIIFVGDIDRCYRLKLFLEQFGIKSCVLNSELPINSRIHVVQEFNKGVYDIIIAADEQEVMGSRTSSKKSKEATDGDDEAKDKMGSSEDEDNEPEQSGKSARPEKRRKTSGKAKDYGISRGIDFQNVACVLNFDLPTTSKSYTHRIGRTGRAGKAGMALSFVVPADEFGKHKPTSFPTAKHDESVLAKIVKKQAKLGHEVKPYHFEMKQVDAFRYRMTDALRAVTRLAIQEARAREIRQELVKSEKLKRHFEENPEELKQLRHDGELRAARIQPHLKHIPDYLMPSKGRKGISSEDVGFVGFRKSGDNRIRKAREKNRGKGKGRKPSGVRKVDPLKTFNRGRK</sequence>
<dbReference type="EC" id="3.6.4.13"/>
<dbReference type="EMBL" id="DS027696">
    <property type="protein sequence ID" value="EAW18960.1"/>
    <property type="molecule type" value="Genomic_DNA"/>
</dbReference>
<dbReference type="RefSeq" id="XP_001260857.1">
    <property type="nucleotide sequence ID" value="XM_001260856.1"/>
</dbReference>
<dbReference type="SMR" id="A1DHV3"/>
<dbReference type="STRING" id="331117.A1DHV3"/>
<dbReference type="EnsemblFungi" id="EAW18960">
    <property type="protein sequence ID" value="EAW18960"/>
    <property type="gene ID" value="NFIA_089170"/>
</dbReference>
<dbReference type="GeneID" id="4587415"/>
<dbReference type="KEGG" id="nfi:NFIA_089170"/>
<dbReference type="VEuPathDB" id="FungiDB:NFIA_089170"/>
<dbReference type="eggNOG" id="KOG0346">
    <property type="taxonomic scope" value="Eukaryota"/>
</dbReference>
<dbReference type="HOGENOM" id="CLU_003041_17_1_1"/>
<dbReference type="OMA" id="NASEQCV"/>
<dbReference type="OrthoDB" id="1191041at2759"/>
<dbReference type="Proteomes" id="UP000006702">
    <property type="component" value="Unassembled WGS sequence"/>
</dbReference>
<dbReference type="GO" id="GO:0005829">
    <property type="term" value="C:cytosol"/>
    <property type="evidence" value="ECO:0007669"/>
    <property type="project" value="TreeGrafter"/>
</dbReference>
<dbReference type="GO" id="GO:0005730">
    <property type="term" value="C:nucleolus"/>
    <property type="evidence" value="ECO:0007669"/>
    <property type="project" value="UniProtKB-SubCell"/>
</dbReference>
<dbReference type="GO" id="GO:0005524">
    <property type="term" value="F:ATP binding"/>
    <property type="evidence" value="ECO:0007669"/>
    <property type="project" value="UniProtKB-KW"/>
</dbReference>
<dbReference type="GO" id="GO:0016887">
    <property type="term" value="F:ATP hydrolysis activity"/>
    <property type="evidence" value="ECO:0007669"/>
    <property type="project" value="RHEA"/>
</dbReference>
<dbReference type="GO" id="GO:0003678">
    <property type="term" value="F:DNA helicase activity"/>
    <property type="evidence" value="ECO:0007669"/>
    <property type="project" value="EnsemblFungi"/>
</dbReference>
<dbReference type="GO" id="GO:0033677">
    <property type="term" value="F:DNA/RNA helicase activity"/>
    <property type="evidence" value="ECO:0007669"/>
    <property type="project" value="EnsemblFungi"/>
</dbReference>
<dbReference type="GO" id="GO:0003723">
    <property type="term" value="F:RNA binding"/>
    <property type="evidence" value="ECO:0007669"/>
    <property type="project" value="UniProtKB-KW"/>
</dbReference>
<dbReference type="GO" id="GO:0003724">
    <property type="term" value="F:RNA helicase activity"/>
    <property type="evidence" value="ECO:0007669"/>
    <property type="project" value="UniProtKB-EC"/>
</dbReference>
<dbReference type="GO" id="GO:0000463">
    <property type="term" value="P:maturation of LSU-rRNA from tricistronic rRNA transcript (SSU-rRNA, 5.8S rRNA, LSU-rRNA)"/>
    <property type="evidence" value="ECO:0007669"/>
    <property type="project" value="EnsemblFungi"/>
</dbReference>
<dbReference type="CDD" id="cd17961">
    <property type="entry name" value="DEADc_DDX56"/>
    <property type="match status" value="1"/>
</dbReference>
<dbReference type="CDD" id="cd18787">
    <property type="entry name" value="SF2_C_DEAD"/>
    <property type="match status" value="1"/>
</dbReference>
<dbReference type="Gene3D" id="3.40.50.300">
    <property type="entry name" value="P-loop containing nucleotide triphosphate hydrolases"/>
    <property type="match status" value="2"/>
</dbReference>
<dbReference type="InterPro" id="IPR011545">
    <property type="entry name" value="DEAD/DEAH_box_helicase_dom"/>
</dbReference>
<dbReference type="InterPro" id="IPR050079">
    <property type="entry name" value="DEAD_box_RNA_helicase"/>
</dbReference>
<dbReference type="InterPro" id="IPR014001">
    <property type="entry name" value="Helicase_ATP-bd"/>
</dbReference>
<dbReference type="InterPro" id="IPR001650">
    <property type="entry name" value="Helicase_C-like"/>
</dbReference>
<dbReference type="InterPro" id="IPR027417">
    <property type="entry name" value="P-loop_NTPase"/>
</dbReference>
<dbReference type="InterPro" id="IPR014014">
    <property type="entry name" value="RNA_helicase_DEAD_Q_motif"/>
</dbReference>
<dbReference type="PANTHER" id="PTHR47959">
    <property type="entry name" value="ATP-DEPENDENT RNA HELICASE RHLE-RELATED"/>
    <property type="match status" value="1"/>
</dbReference>
<dbReference type="PANTHER" id="PTHR47959:SF21">
    <property type="entry name" value="DEAD-BOX HELICASE 56"/>
    <property type="match status" value="1"/>
</dbReference>
<dbReference type="Pfam" id="PF00270">
    <property type="entry name" value="DEAD"/>
    <property type="match status" value="1"/>
</dbReference>
<dbReference type="Pfam" id="PF00271">
    <property type="entry name" value="Helicase_C"/>
    <property type="match status" value="2"/>
</dbReference>
<dbReference type="SMART" id="SM00487">
    <property type="entry name" value="DEXDc"/>
    <property type="match status" value="1"/>
</dbReference>
<dbReference type="SMART" id="SM00490">
    <property type="entry name" value="HELICc"/>
    <property type="match status" value="1"/>
</dbReference>
<dbReference type="SUPFAM" id="SSF52540">
    <property type="entry name" value="P-loop containing nucleoside triphosphate hydrolases"/>
    <property type="match status" value="2"/>
</dbReference>
<dbReference type="PROSITE" id="PS51192">
    <property type="entry name" value="HELICASE_ATP_BIND_1"/>
    <property type="match status" value="1"/>
</dbReference>
<dbReference type="PROSITE" id="PS51194">
    <property type="entry name" value="HELICASE_CTER"/>
    <property type="match status" value="1"/>
</dbReference>
<dbReference type="PROSITE" id="PS51195">
    <property type="entry name" value="Q_MOTIF"/>
    <property type="match status" value="1"/>
</dbReference>